<organism>
    <name type="scientific">Cricetulus longicaudatus</name>
    <name type="common">Long-tailed dwarf hamster</name>
    <dbReference type="NCBI Taxonomy" id="10030"/>
    <lineage>
        <taxon>Eukaryota</taxon>
        <taxon>Metazoa</taxon>
        <taxon>Chordata</taxon>
        <taxon>Craniata</taxon>
        <taxon>Vertebrata</taxon>
        <taxon>Euteleostomi</taxon>
        <taxon>Mammalia</taxon>
        <taxon>Eutheria</taxon>
        <taxon>Euarchontoglires</taxon>
        <taxon>Glires</taxon>
        <taxon>Rodentia</taxon>
        <taxon>Myomorpha</taxon>
        <taxon>Muroidea</taxon>
        <taxon>Cricetidae</taxon>
        <taxon>Cricetinae</taxon>
        <taxon>Cricetulus</taxon>
    </lineage>
</organism>
<sequence>MWAFPELPLPLLVNLFGSLLGFVATVTLIPAFRSHFIAARLCGQDLNKLSRQQIPESQGVICGAVFLIILFCFIPFPFLNCFVEEQCKAFPHHEFVALIGALLAICCMIFLGFADDVLNLPWRHKLLLPTAASLPLLMVYFTNFGNTTIVVPKPFRWILGLHLDLGILYYVYMGLLAVFCTNAINILAGINGLEAGQSLVISASIIVFNLVELEGDYRDDHVFSLYFMIPFFFTTLGLLYHNWYPSQVFVGDTFCYFAGMTFAVVGILGHFSKTMLLFFIPQVFNFLYSLPQLLHAIPCPRHRIPRLNPKTGKLEMSYSKFKTKNLSFLGTFILKVAERLQLVTVHRGESEDGAFTECNNMTLINLLLKIFGPIHERNLTLLLLLLQILSSAVTFSIRYQLVRLFYDV</sequence>
<name>GPT_CRILO</name>
<evidence type="ECO:0000250" key="1">
    <source>
        <dbReference type="UniProtKB" id="Q9H3H5"/>
    </source>
</evidence>
<evidence type="ECO:0000255" key="2"/>
<evidence type="ECO:0000269" key="3">
    <source>
    </source>
</evidence>
<evidence type="ECO:0000269" key="4">
    <source>
    </source>
</evidence>
<evidence type="ECO:0000305" key="5"/>
<evidence type="ECO:0000305" key="6">
    <source>
    </source>
</evidence>
<dbReference type="EC" id="2.7.8.15" evidence="4"/>
<dbReference type="EMBL" id="J05590">
    <property type="protein sequence ID" value="AAA36965.1"/>
    <property type="molecule type" value="mRNA"/>
</dbReference>
<dbReference type="PIR" id="A37813">
    <property type="entry name" value="A37813"/>
</dbReference>
<dbReference type="SMR" id="P23338"/>
<dbReference type="GlyCosmos" id="P23338">
    <property type="glycosylation" value="1 site, No reported glycans"/>
</dbReference>
<dbReference type="UniPathway" id="UPA00378"/>
<dbReference type="GO" id="GO:0005789">
    <property type="term" value="C:endoplasmic reticulum membrane"/>
    <property type="evidence" value="ECO:0007669"/>
    <property type="project" value="UniProtKB-SubCell"/>
</dbReference>
<dbReference type="GO" id="GO:0016757">
    <property type="term" value="F:glycosyltransferase activity"/>
    <property type="evidence" value="ECO:0007669"/>
    <property type="project" value="UniProtKB-KW"/>
</dbReference>
<dbReference type="GO" id="GO:0046872">
    <property type="term" value="F:metal ion binding"/>
    <property type="evidence" value="ECO:0007669"/>
    <property type="project" value="UniProtKB-KW"/>
</dbReference>
<dbReference type="GO" id="GO:0003975">
    <property type="term" value="F:UDP-N-acetylglucosamine-dolichyl-phosphate N-acetylglucosaminephosphotransferase activity"/>
    <property type="evidence" value="ECO:0000250"/>
    <property type="project" value="UniProtKB"/>
</dbReference>
<dbReference type="GO" id="GO:0006488">
    <property type="term" value="P:dolichol-linked oligosaccharide biosynthetic process"/>
    <property type="evidence" value="ECO:0000250"/>
    <property type="project" value="UniProtKB"/>
</dbReference>
<dbReference type="CDD" id="cd06855">
    <property type="entry name" value="GT_GPT_euk"/>
    <property type="match status" value="1"/>
</dbReference>
<dbReference type="InterPro" id="IPR048439">
    <property type="entry name" value="DPAGT1_ins"/>
</dbReference>
<dbReference type="InterPro" id="IPR000715">
    <property type="entry name" value="Glycosyl_transferase_4"/>
</dbReference>
<dbReference type="InterPro" id="IPR033895">
    <property type="entry name" value="GPT"/>
</dbReference>
<dbReference type="PANTHER" id="PTHR10571">
    <property type="entry name" value="UDP-N-ACETYLGLUCOSAMINE--DOLICHYL-PHOSPHATE N-ACETYLGLUCOSAMINEPHOSPHOTRANSFERASE"/>
    <property type="match status" value="1"/>
</dbReference>
<dbReference type="PANTHER" id="PTHR10571:SF0">
    <property type="entry name" value="UDP-N-ACETYLGLUCOSAMINE--DOLICHYL-PHOSPHATE N-ACETYLGLUCOSAMINEPHOSPHOTRANSFERASE"/>
    <property type="match status" value="1"/>
</dbReference>
<dbReference type="Pfam" id="PF21383">
    <property type="entry name" value="DPAGT1_ins"/>
    <property type="match status" value="1"/>
</dbReference>
<dbReference type="Pfam" id="PF00953">
    <property type="entry name" value="Glycos_transf_4"/>
    <property type="match status" value="1"/>
</dbReference>
<proteinExistence type="evidence at protein level"/>
<comment type="function">
    <text evidence="4">UDP-N-acetylglucosamine--dolichyl-phosphate N-acetylglucosaminephosphotransferase that operates in the biosynthetic pathway of dolichol-linked oligosaccharides, the glycan precursors employed in protein asparagine (N)-glycosylation. The assembly of dolichol-linked oligosaccharides begins on the cytosolic side of the endoplasmic reticulum membrane and finishes in its lumen. The sequential addition of sugars to dolichol pyrophosphate produces dolichol-linked oligosaccharides containing fourteen sugars, including two GlcNAcs, nine mannoses and three glucoses. Once assembled, the oligosaccharide is transferred from the lipid to nascent proteins by oligosaccharyltransferases. Catalyzes the initial step of dolichol-linked oligosaccharide biosynthesis, transfering GlcNAc-1-P from cytosolic UDP-GlcNAc onto the carrier lipid dolichyl phosphate (P-dolichol), yielding GlcNAc-P-P-dolichol embedded in the cytoplasmic leaflet of the endoplasmic reticulum membrane.</text>
</comment>
<comment type="catalytic activity">
    <reaction evidence="4">
        <text>a di-trans,poly-cis-dolichyl phosphate + UDP-N-acetyl-alpha-D-glucosamine = an N-acetyl-alpha-D-glucosaminyl-diphospho-di-trans,poly-cis-dolichol + UMP</text>
        <dbReference type="Rhea" id="RHEA:13289"/>
        <dbReference type="Rhea" id="RHEA-COMP:19498"/>
        <dbReference type="Rhea" id="RHEA-COMP:19507"/>
        <dbReference type="ChEBI" id="CHEBI:57683"/>
        <dbReference type="ChEBI" id="CHEBI:57705"/>
        <dbReference type="ChEBI" id="CHEBI:57865"/>
        <dbReference type="ChEBI" id="CHEBI:58427"/>
        <dbReference type="EC" id="2.7.8.15"/>
    </reaction>
    <physiologicalReaction direction="left-to-right" evidence="6">
        <dbReference type="Rhea" id="RHEA:13290"/>
    </physiologicalReaction>
</comment>
<comment type="cofactor">
    <cofactor evidence="1">
        <name>Mg(2+)</name>
        <dbReference type="ChEBI" id="CHEBI:18420"/>
    </cofactor>
</comment>
<comment type="activity regulation">
    <text evidence="4">Inhibited by natural nucleoside antibiotic tunicamycin, which acts as a structural analog and competitor of UDP-GlcNAc.</text>
</comment>
<comment type="pathway">
    <text evidence="4">Protein modification; protein glycosylation.</text>
</comment>
<comment type="subunit">
    <text evidence="1">Homodimer.</text>
</comment>
<comment type="subcellular location">
    <subcellularLocation>
        <location evidence="3">Endoplasmic reticulum membrane</location>
        <topology evidence="3">Multi-pass membrane protein</topology>
    </subcellularLocation>
</comment>
<comment type="similarity">
    <text evidence="5">Belongs to the glycosyltransferase 4 family.</text>
</comment>
<keyword id="KW-0256">Endoplasmic reticulum</keyword>
<keyword id="KW-0325">Glycoprotein</keyword>
<keyword id="KW-0328">Glycosyltransferase</keyword>
<keyword id="KW-0460">Magnesium</keyword>
<keyword id="KW-0472">Membrane</keyword>
<keyword id="KW-0479">Metal-binding</keyword>
<keyword id="KW-0808">Transferase</keyword>
<keyword id="KW-0812">Transmembrane</keyword>
<keyword id="KW-1133">Transmembrane helix</keyword>
<protein>
    <recommendedName>
        <fullName>UDP-N-acetylglucosamine--dolichyl-phosphate N-acetylglucosaminephosphotransferase</fullName>
        <ecNumber evidence="4">2.7.8.15</ecNumber>
    </recommendedName>
    <alternativeName>
        <fullName>GlcNAc-1-P transferase</fullName>
        <shortName>G1PT</shortName>
        <shortName>GPT</shortName>
    </alternativeName>
    <alternativeName>
        <fullName>N-acetylglucosamine-1-phosphate transferase</fullName>
    </alternativeName>
</protein>
<gene>
    <name type="primary">DPAGT1</name>
    <name type="synonym">DPAGT2</name>
    <name type="synonym">GNPTA</name>
</gene>
<feature type="chain" id="PRO_0000108759" description="UDP-N-acetylglucosamine--dolichyl-phosphate N-acetylglucosaminephosphotransferase">
    <location>
        <begin position="1"/>
        <end position="408"/>
    </location>
</feature>
<feature type="topological domain" description="Lumenal" evidence="3">
    <location>
        <begin position="1"/>
        <end position="10"/>
    </location>
</feature>
<feature type="transmembrane region" description="Helical; Name=Helix 1" evidence="1">
    <location>
        <begin position="11"/>
        <end position="38"/>
    </location>
</feature>
<feature type="topological domain" description="Cytoplasmic" evidence="3">
    <location>
        <begin position="39"/>
        <end position="58"/>
    </location>
</feature>
<feature type="transmembrane region" description="Helical; Name=Helix 2" evidence="1">
    <location>
        <begin position="59"/>
        <end position="78"/>
    </location>
</feature>
<feature type="topological domain" description="Lumenal" evidence="3">
    <location>
        <begin position="79"/>
        <end position="91"/>
    </location>
</feature>
<feature type="transmembrane region" description="Helical; Name=Helix 3" evidence="1">
    <location>
        <begin position="92"/>
        <end position="118"/>
    </location>
</feature>
<feature type="topological domain" description="Cytoplasmic" evidence="3">
    <location>
        <begin position="119"/>
        <end position="121"/>
    </location>
</feature>
<feature type="transmembrane region" description="Helical; Name=Helix 4" evidence="1">
    <location>
        <begin position="122"/>
        <end position="143"/>
    </location>
</feature>
<feature type="topological domain" description="Lumenal" evidence="3">
    <location>
        <begin position="144"/>
        <end position="166"/>
    </location>
</feature>
<feature type="transmembrane region" description="Helical; Name=Helix 5" evidence="1">
    <location>
        <begin position="167"/>
        <end position="186"/>
    </location>
</feature>
<feature type="topological domain" description="Cytoplasmic" evidence="3">
    <location>
        <begin position="187"/>
        <end position="192"/>
    </location>
</feature>
<feature type="transmembrane region" description="Helical; Name=Helix 6" evidence="1">
    <location>
        <begin position="193"/>
        <end position="213"/>
    </location>
</feature>
<feature type="topological domain" description="Lumenal" evidence="3">
    <location>
        <begin position="214"/>
        <end position="218"/>
    </location>
</feature>
<feature type="transmembrane region" description="Helical; Name=Helix 7" evidence="1">
    <location>
        <begin position="219"/>
        <end position="242"/>
    </location>
</feature>
<feature type="topological domain" description="Cytoplasmic" evidence="3">
    <location>
        <begin position="243"/>
        <end position="250"/>
    </location>
</feature>
<feature type="transmembrane region" description="Helical; Name=Helix 8" evidence="1">
    <location>
        <begin position="251"/>
        <end position="269"/>
    </location>
</feature>
<feature type="topological domain" description="Lumenal" evidence="3">
    <location>
        <begin position="270"/>
        <end position="271"/>
    </location>
</feature>
<feature type="transmembrane region" description="Helical; Name=Helix 9" evidence="1">
    <location>
        <begin position="272"/>
        <end position="293"/>
    </location>
</feature>
<feature type="topological domain" description="Cytoplasmic" evidence="3">
    <location>
        <begin position="294"/>
        <end position="375"/>
    </location>
</feature>
<feature type="transmembrane region" description="Helical; Name=Helix 10" evidence="1">
    <location>
        <begin position="376"/>
        <end position="400"/>
    </location>
</feature>
<feature type="topological domain" description="Lumenal" evidence="3">
    <location>
        <begin position="401"/>
        <end position="408"/>
    </location>
</feature>
<feature type="binding site" evidence="1">
    <location>
        <begin position="44"/>
        <end position="46"/>
    </location>
    <ligand>
        <name>UDP-N-acetyl-alpha-D-glucosamine</name>
        <dbReference type="ChEBI" id="CHEBI:57705"/>
    </ligand>
</feature>
<feature type="binding site" evidence="1">
    <location>
        <position position="56"/>
    </location>
    <ligand>
        <name>UDP-N-acetyl-alpha-D-glucosamine</name>
        <dbReference type="ChEBI" id="CHEBI:57705"/>
    </ligand>
</feature>
<feature type="binding site" evidence="1">
    <location>
        <position position="125"/>
    </location>
    <ligand>
        <name>dolichyl phosphate</name>
        <dbReference type="ChEBI" id="CHEBI:57683"/>
    </ligand>
</feature>
<feature type="binding site" evidence="1">
    <location>
        <begin position="178"/>
        <end position="186"/>
    </location>
    <ligand>
        <name>dolichyl phosphate</name>
        <dbReference type="ChEBI" id="CHEBI:57683"/>
    </ligand>
</feature>
<feature type="binding site" evidence="1">
    <location>
        <position position="185"/>
    </location>
    <ligand>
        <name>Mg(2+)</name>
        <dbReference type="ChEBI" id="CHEBI:18420"/>
    </ligand>
</feature>
<feature type="binding site" evidence="1">
    <location>
        <position position="191"/>
    </location>
    <ligand>
        <name>UDP-N-acetyl-alpha-D-glucosamine</name>
        <dbReference type="ChEBI" id="CHEBI:57705"/>
    </ligand>
</feature>
<feature type="binding site" evidence="1">
    <location>
        <position position="252"/>
    </location>
    <ligand>
        <name>Mg(2+)</name>
        <dbReference type="ChEBI" id="CHEBI:18420"/>
    </ligand>
</feature>
<feature type="binding site" evidence="1">
    <location>
        <begin position="301"/>
        <end position="303"/>
    </location>
    <ligand>
        <name>UDP-N-acetyl-alpha-D-glucosamine</name>
        <dbReference type="ChEBI" id="CHEBI:57705"/>
    </ligand>
</feature>
<feature type="glycosylation site" description="N-linked (GlcNAc...) asparagine" evidence="2">
    <location>
        <position position="146"/>
    </location>
</feature>
<accession>P23338</accession>
<reference key="1">
    <citation type="journal article" date="1990" name="J. Biol. Chem.">
        <title>Cloning, sequence, and expression of a cDNA encoding hamster UDP-GlcNAc:dolichol phosphate N-acetylglucosamine-1-phosphate transferase.</title>
        <authorList>
            <person name="Zhu X."/>
            <person name="Lehrman M.A."/>
        </authorList>
    </citation>
    <scope>NUCLEOTIDE SEQUENCE [MRNA]</scope>
    <scope>FUNCTION</scope>
    <scope>CATALYTIC ACTIVITY</scope>
    <scope>ACTIVITY REGULATION</scope>
    <scope>PATHWAY</scope>
</reference>
<reference key="2">
    <citation type="journal article" date="1988" name="J. Biol. Chem.">
        <title>Amplification and molecular cloning of the hamster tunicamycin-sensitive N-acetylglucosamine-1-phosphate transferase gene. The hamster and yeast enzymes share a common peptide sequence.</title>
        <authorList>
            <person name="Lehrman M.A."/>
            <person name="Zhu X."/>
            <person name="Khounlo S."/>
        </authorList>
    </citation>
    <scope>NUCLEOTIDE SEQUENCE [MRNA] OF 248-271</scope>
</reference>
<reference key="3">
    <citation type="journal article" date="1991" name="Glycobiology">
        <title>Biosynthesis of N-acetylglucosamine-P-P-dolichol, the committed step of asparagine-linked oligosaccharide assembly.</title>
        <authorList>
            <person name="Lehrman M.A."/>
        </authorList>
    </citation>
    <scope>SUBCELLULAR LOCATION</scope>
    <scope>TOPOLOGY</scope>
</reference>